<organism>
    <name type="scientific">Nocardia farcinica (strain IFM 10152)</name>
    <dbReference type="NCBI Taxonomy" id="247156"/>
    <lineage>
        <taxon>Bacteria</taxon>
        <taxon>Bacillati</taxon>
        <taxon>Actinomycetota</taxon>
        <taxon>Actinomycetes</taxon>
        <taxon>Mycobacteriales</taxon>
        <taxon>Nocardiaceae</taxon>
        <taxon>Nocardia</taxon>
    </lineage>
</organism>
<comment type="catalytic activity">
    <reaction evidence="1">
        <text>2-(N(omega)-L-arginino)succinate = fumarate + L-arginine</text>
        <dbReference type="Rhea" id="RHEA:24020"/>
        <dbReference type="ChEBI" id="CHEBI:29806"/>
        <dbReference type="ChEBI" id="CHEBI:32682"/>
        <dbReference type="ChEBI" id="CHEBI:57472"/>
        <dbReference type="EC" id="4.3.2.1"/>
    </reaction>
</comment>
<comment type="pathway">
    <text evidence="1">Amino-acid biosynthesis; L-arginine biosynthesis; L-arginine from L-ornithine and carbamoyl phosphate: step 3/3.</text>
</comment>
<comment type="subcellular location">
    <subcellularLocation>
        <location evidence="1">Cytoplasm</location>
    </subcellularLocation>
</comment>
<comment type="similarity">
    <text evidence="1">Belongs to the lyase 1 family. Argininosuccinate lyase subfamily.</text>
</comment>
<accession>Q5YYD2</accession>
<feature type="chain" id="PRO_0000137797" description="Argininosuccinate lyase">
    <location>
        <begin position="1"/>
        <end position="473"/>
    </location>
</feature>
<name>ARLY_NOCFA</name>
<proteinExistence type="inferred from homology"/>
<keyword id="KW-0028">Amino-acid biosynthesis</keyword>
<keyword id="KW-0055">Arginine biosynthesis</keyword>
<keyword id="KW-0963">Cytoplasm</keyword>
<keyword id="KW-0456">Lyase</keyword>
<keyword id="KW-1185">Reference proteome</keyword>
<dbReference type="EC" id="4.3.2.1" evidence="1"/>
<dbReference type="EMBL" id="AP006618">
    <property type="protein sequence ID" value="BAD56809.1"/>
    <property type="molecule type" value="Genomic_DNA"/>
</dbReference>
<dbReference type="RefSeq" id="WP_011208494.1">
    <property type="nucleotide sequence ID" value="NC_006361.1"/>
</dbReference>
<dbReference type="SMR" id="Q5YYD2"/>
<dbReference type="STRING" id="247156.NFA_19630"/>
<dbReference type="GeneID" id="61132742"/>
<dbReference type="KEGG" id="nfa:NFA_19630"/>
<dbReference type="eggNOG" id="COG0165">
    <property type="taxonomic scope" value="Bacteria"/>
</dbReference>
<dbReference type="HOGENOM" id="CLU_027272_2_2_11"/>
<dbReference type="OrthoDB" id="9769623at2"/>
<dbReference type="UniPathway" id="UPA00068">
    <property type="reaction ID" value="UER00114"/>
</dbReference>
<dbReference type="Proteomes" id="UP000006820">
    <property type="component" value="Chromosome"/>
</dbReference>
<dbReference type="GO" id="GO:0005829">
    <property type="term" value="C:cytosol"/>
    <property type="evidence" value="ECO:0007669"/>
    <property type="project" value="TreeGrafter"/>
</dbReference>
<dbReference type="GO" id="GO:0004056">
    <property type="term" value="F:argininosuccinate lyase activity"/>
    <property type="evidence" value="ECO:0007669"/>
    <property type="project" value="UniProtKB-UniRule"/>
</dbReference>
<dbReference type="GO" id="GO:0042450">
    <property type="term" value="P:arginine biosynthetic process via ornithine"/>
    <property type="evidence" value="ECO:0007669"/>
    <property type="project" value="InterPro"/>
</dbReference>
<dbReference type="GO" id="GO:0006526">
    <property type="term" value="P:L-arginine biosynthetic process"/>
    <property type="evidence" value="ECO:0007669"/>
    <property type="project" value="UniProtKB-UniRule"/>
</dbReference>
<dbReference type="CDD" id="cd01359">
    <property type="entry name" value="Argininosuccinate_lyase"/>
    <property type="match status" value="1"/>
</dbReference>
<dbReference type="FunFam" id="1.10.40.30:FF:000001">
    <property type="entry name" value="Argininosuccinate lyase"/>
    <property type="match status" value="1"/>
</dbReference>
<dbReference type="FunFam" id="1.20.200.10:FF:000015">
    <property type="entry name" value="argininosuccinate lyase isoform X2"/>
    <property type="match status" value="1"/>
</dbReference>
<dbReference type="Gene3D" id="1.10.40.30">
    <property type="entry name" value="Fumarase/aspartase (C-terminal domain)"/>
    <property type="match status" value="1"/>
</dbReference>
<dbReference type="Gene3D" id="1.20.200.10">
    <property type="entry name" value="Fumarase/aspartase (Central domain)"/>
    <property type="match status" value="1"/>
</dbReference>
<dbReference type="Gene3D" id="1.10.275.10">
    <property type="entry name" value="Fumarase/aspartase (N-terminal domain)"/>
    <property type="match status" value="1"/>
</dbReference>
<dbReference type="HAMAP" id="MF_00006">
    <property type="entry name" value="Arg_succ_lyase"/>
    <property type="match status" value="1"/>
</dbReference>
<dbReference type="InterPro" id="IPR029419">
    <property type="entry name" value="Arg_succ_lyase_C"/>
</dbReference>
<dbReference type="InterPro" id="IPR009049">
    <property type="entry name" value="Argininosuccinate_lyase"/>
</dbReference>
<dbReference type="InterPro" id="IPR024083">
    <property type="entry name" value="Fumarase/histidase_N"/>
</dbReference>
<dbReference type="InterPro" id="IPR020557">
    <property type="entry name" value="Fumarate_lyase_CS"/>
</dbReference>
<dbReference type="InterPro" id="IPR000362">
    <property type="entry name" value="Fumarate_lyase_fam"/>
</dbReference>
<dbReference type="InterPro" id="IPR022761">
    <property type="entry name" value="Fumarate_lyase_N"/>
</dbReference>
<dbReference type="InterPro" id="IPR008948">
    <property type="entry name" value="L-Aspartase-like"/>
</dbReference>
<dbReference type="NCBIfam" id="TIGR00838">
    <property type="entry name" value="argH"/>
    <property type="match status" value="1"/>
</dbReference>
<dbReference type="PANTHER" id="PTHR43814">
    <property type="entry name" value="ARGININOSUCCINATE LYASE"/>
    <property type="match status" value="1"/>
</dbReference>
<dbReference type="PANTHER" id="PTHR43814:SF1">
    <property type="entry name" value="ARGININOSUCCINATE LYASE"/>
    <property type="match status" value="1"/>
</dbReference>
<dbReference type="Pfam" id="PF14698">
    <property type="entry name" value="ASL_C2"/>
    <property type="match status" value="1"/>
</dbReference>
<dbReference type="Pfam" id="PF00206">
    <property type="entry name" value="Lyase_1"/>
    <property type="match status" value="1"/>
</dbReference>
<dbReference type="PRINTS" id="PR00145">
    <property type="entry name" value="ARGSUCLYASE"/>
</dbReference>
<dbReference type="PRINTS" id="PR00149">
    <property type="entry name" value="FUMRATELYASE"/>
</dbReference>
<dbReference type="SUPFAM" id="SSF48557">
    <property type="entry name" value="L-aspartase-like"/>
    <property type="match status" value="1"/>
</dbReference>
<dbReference type="PROSITE" id="PS00163">
    <property type="entry name" value="FUMARATE_LYASES"/>
    <property type="match status" value="1"/>
</dbReference>
<reference key="1">
    <citation type="journal article" date="2004" name="Proc. Natl. Acad. Sci. U.S.A.">
        <title>The complete genomic sequence of Nocardia farcinica IFM 10152.</title>
        <authorList>
            <person name="Ishikawa J."/>
            <person name="Yamashita A."/>
            <person name="Mikami Y."/>
            <person name="Hoshino Y."/>
            <person name="Kurita H."/>
            <person name="Hotta K."/>
            <person name="Shiba T."/>
            <person name="Hattori M."/>
        </authorList>
    </citation>
    <scope>NUCLEOTIDE SEQUENCE [LARGE SCALE GENOMIC DNA]</scope>
    <source>
        <strain>IFM 10152</strain>
    </source>
</reference>
<gene>
    <name evidence="1" type="primary">argH</name>
    <name type="ordered locus">NFA_19630</name>
</gene>
<sequence>MTQSGGTNTGALWGGRFASGPAAAMAALSKSTHFDWALAPYDIRASKAHARVLHKAGLLSDADLDTMLAGLDGLAADVASGAFVPAETDEDVHGALERGLIDRVGAEVGGRLRAGRSRNDQVATLFRMWLRDGVRRVAAGVLDVVDALVEQAAAHPDAVMPGKTHLQAAQPVLLAHHLLAHAHPLLRDIERLRDFDKRAAVSPYGSGALAGSSLGLDPEAIAADLDFDAAAANSIDATSARDFAAEAAFVLAMIAVDLSRMAEEVIIWSTPEFGYVTLADAWSTGSSIMPQKKNPDVSELTRGKAGRLIGNLTGLLATLKAQPLAYNRDLQEDKEPVFDSVAQLELLLPAIAGLVGTLTFHTDRMAELAPAGFTLATDIAEWLVREGVPFRVAHEAAGACVRAAEARGVGLDALTDEEFAAIDPALTPRVREVLTVQGSIASRNAKGGTAGTRVAEQLAEVRAAAQQARAWIA</sequence>
<evidence type="ECO:0000255" key="1">
    <source>
        <dbReference type="HAMAP-Rule" id="MF_00006"/>
    </source>
</evidence>
<protein>
    <recommendedName>
        <fullName evidence="1">Argininosuccinate lyase</fullName>
        <shortName evidence="1">ASAL</shortName>
        <ecNumber evidence="1">4.3.2.1</ecNumber>
    </recommendedName>
    <alternativeName>
        <fullName evidence="1">Arginosuccinase</fullName>
    </alternativeName>
</protein>